<keyword id="KW-0238">DNA-binding</keyword>
<keyword id="KW-0479">Metal-binding</keyword>
<keyword id="KW-1185">Reference proteome</keyword>
<keyword id="KW-0677">Repeat</keyword>
<keyword id="KW-0862">Zinc</keyword>
<keyword id="KW-0863">Zinc-finger</keyword>
<organism>
    <name type="scientific">Oryza sativa subsp. japonica</name>
    <name type="common">Rice</name>
    <dbReference type="NCBI Taxonomy" id="39947"/>
    <lineage>
        <taxon>Eukaryota</taxon>
        <taxon>Viridiplantae</taxon>
        <taxon>Streptophyta</taxon>
        <taxon>Embryophyta</taxon>
        <taxon>Tracheophyta</taxon>
        <taxon>Spermatophyta</taxon>
        <taxon>Magnoliopsida</taxon>
        <taxon>Liliopsida</taxon>
        <taxon>Poales</taxon>
        <taxon>Poaceae</taxon>
        <taxon>BOP clade</taxon>
        <taxon>Oryzoideae</taxon>
        <taxon>Oryzeae</taxon>
        <taxon>Oryzinae</taxon>
        <taxon>Oryza</taxon>
        <taxon>Oryza sativa</taxon>
    </lineage>
</organism>
<sequence>MAGRGGMVEWEVGRRRDSEDVIVLSPGPPARRRPPPVKAVEPESGGFAYEPPEKLFYKTRVCETFVTSGRCMFEDGCTFAHGDEELRPSLTACAGGWRKPSPSLSAAAPPVAVAPTPPPAQVVHELLARGSGSGGGGHRAITKVCFEFRDKGICYFGETCAFPHVSAAEIRQGSRLSSMSSSSWEMPARRSVAVTVPRTFVSVPPVAPPPPPPHYRVNNSSSYNAASMAAAAPAASDANLVAQQPPPEQGGRKMTRLEMLSLKKMTGIYGDWLEGYEHP</sequence>
<accession>Q5VR07</accession>
<accession>B7F0G8</accession>
<dbReference type="EMBL" id="AP003215">
    <property type="protein sequence ID" value="BAD68121.1"/>
    <property type="molecule type" value="Genomic_DNA"/>
</dbReference>
<dbReference type="EMBL" id="AP008207">
    <property type="protein sequence ID" value="BAF04079.1"/>
    <property type="molecule type" value="Genomic_DNA"/>
</dbReference>
<dbReference type="EMBL" id="AP014957">
    <property type="protein sequence ID" value="BAS70658.1"/>
    <property type="molecule type" value="Genomic_DNA"/>
</dbReference>
<dbReference type="EMBL" id="AK107662">
    <property type="protein sequence ID" value="BAG98115.1"/>
    <property type="molecule type" value="mRNA"/>
</dbReference>
<dbReference type="RefSeq" id="XP_015622143.1">
    <property type="nucleotide sequence ID" value="XM_015766657.1"/>
</dbReference>
<dbReference type="FunCoup" id="Q5VR07">
    <property type="interactions" value="752"/>
</dbReference>
<dbReference type="STRING" id="39947.Q5VR07"/>
<dbReference type="PaxDb" id="39947-Q5VR07"/>
<dbReference type="EnsemblPlants" id="Os01t0174600-01">
    <property type="protein sequence ID" value="Os01t0174600-01"/>
    <property type="gene ID" value="Os01g0174600"/>
</dbReference>
<dbReference type="Gramene" id="Os01t0174600-01">
    <property type="protein sequence ID" value="Os01t0174600-01"/>
    <property type="gene ID" value="Os01g0174600"/>
</dbReference>
<dbReference type="KEGG" id="dosa:Os01g0174600"/>
<dbReference type="eggNOG" id="ENOG502SDZ0">
    <property type="taxonomic scope" value="Eukaryota"/>
</dbReference>
<dbReference type="HOGENOM" id="CLU_998869_0_0_1"/>
<dbReference type="InParanoid" id="Q5VR07"/>
<dbReference type="OMA" id="CTYAHAT"/>
<dbReference type="OrthoDB" id="410307at2759"/>
<dbReference type="Proteomes" id="UP000000763">
    <property type="component" value="Chromosome 1"/>
</dbReference>
<dbReference type="Proteomes" id="UP000059680">
    <property type="component" value="Chromosome 1"/>
</dbReference>
<dbReference type="GO" id="GO:0003677">
    <property type="term" value="F:DNA binding"/>
    <property type="evidence" value="ECO:0007669"/>
    <property type="project" value="UniProtKB-KW"/>
</dbReference>
<dbReference type="GO" id="GO:0003729">
    <property type="term" value="F:mRNA binding"/>
    <property type="evidence" value="ECO:0007669"/>
    <property type="project" value="InterPro"/>
</dbReference>
<dbReference type="GO" id="GO:0008270">
    <property type="term" value="F:zinc ion binding"/>
    <property type="evidence" value="ECO:0007669"/>
    <property type="project" value="UniProtKB-KW"/>
</dbReference>
<dbReference type="FunFam" id="4.10.1000.10:FF:000003">
    <property type="entry name" value="Zinc finger CCCH domain-containing protein"/>
    <property type="match status" value="1"/>
</dbReference>
<dbReference type="Gene3D" id="4.10.1000.10">
    <property type="entry name" value="Zinc finger, CCCH-type"/>
    <property type="match status" value="1"/>
</dbReference>
<dbReference type="InterPro" id="IPR045877">
    <property type="entry name" value="ZFP36-like"/>
</dbReference>
<dbReference type="InterPro" id="IPR000571">
    <property type="entry name" value="Znf_CCCH"/>
</dbReference>
<dbReference type="InterPro" id="IPR036855">
    <property type="entry name" value="Znf_CCCH_sf"/>
</dbReference>
<dbReference type="PANTHER" id="PTHR12547">
    <property type="entry name" value="CCCH ZINC FINGER/TIS11-RELATED"/>
    <property type="match status" value="1"/>
</dbReference>
<dbReference type="PANTHER" id="PTHR12547:SF167">
    <property type="entry name" value="ZINC FINGER CCCH DOMAIN-CONTAINING PROTEIN 1"/>
    <property type="match status" value="1"/>
</dbReference>
<dbReference type="Pfam" id="PF00642">
    <property type="entry name" value="zf-CCCH"/>
    <property type="match status" value="1"/>
</dbReference>
<dbReference type="SMART" id="SM00356">
    <property type="entry name" value="ZnF_C3H1"/>
    <property type="match status" value="2"/>
</dbReference>
<dbReference type="SUPFAM" id="SSF90229">
    <property type="entry name" value="CCCH zinc finger"/>
    <property type="match status" value="2"/>
</dbReference>
<dbReference type="PROSITE" id="PS50103">
    <property type="entry name" value="ZF_C3H1"/>
    <property type="match status" value="2"/>
</dbReference>
<proteinExistence type="evidence at transcript level"/>
<evidence type="ECO:0000255" key="1">
    <source>
        <dbReference type="PROSITE-ProRule" id="PRU00723"/>
    </source>
</evidence>
<evidence type="ECO:0000256" key="2">
    <source>
        <dbReference type="SAM" id="MobiDB-lite"/>
    </source>
</evidence>
<name>C3H1_ORYSJ</name>
<protein>
    <recommendedName>
        <fullName>Zinc finger CCCH domain-containing protein 1</fullName>
        <shortName>OsC3H1</shortName>
    </recommendedName>
</protein>
<reference key="1">
    <citation type="journal article" date="2002" name="Nature">
        <title>The genome sequence and structure of rice chromosome 1.</title>
        <authorList>
            <person name="Sasaki T."/>
            <person name="Matsumoto T."/>
            <person name="Yamamoto K."/>
            <person name="Sakata K."/>
            <person name="Baba T."/>
            <person name="Katayose Y."/>
            <person name="Wu J."/>
            <person name="Niimura Y."/>
            <person name="Cheng Z."/>
            <person name="Nagamura Y."/>
            <person name="Antonio B.A."/>
            <person name="Kanamori H."/>
            <person name="Hosokawa S."/>
            <person name="Masukawa M."/>
            <person name="Arikawa K."/>
            <person name="Chiden Y."/>
            <person name="Hayashi M."/>
            <person name="Okamoto M."/>
            <person name="Ando T."/>
            <person name="Aoki H."/>
            <person name="Arita K."/>
            <person name="Hamada M."/>
            <person name="Harada C."/>
            <person name="Hijishita S."/>
            <person name="Honda M."/>
            <person name="Ichikawa Y."/>
            <person name="Idonuma A."/>
            <person name="Iijima M."/>
            <person name="Ikeda M."/>
            <person name="Ikeno M."/>
            <person name="Ito S."/>
            <person name="Ito T."/>
            <person name="Ito Y."/>
            <person name="Ito Y."/>
            <person name="Iwabuchi A."/>
            <person name="Kamiya K."/>
            <person name="Karasawa W."/>
            <person name="Katagiri S."/>
            <person name="Kikuta A."/>
            <person name="Kobayashi N."/>
            <person name="Kono I."/>
            <person name="Machita K."/>
            <person name="Maehara T."/>
            <person name="Mizuno H."/>
            <person name="Mizubayashi T."/>
            <person name="Mukai Y."/>
            <person name="Nagasaki H."/>
            <person name="Nakashima M."/>
            <person name="Nakama Y."/>
            <person name="Nakamichi Y."/>
            <person name="Nakamura M."/>
            <person name="Namiki N."/>
            <person name="Negishi M."/>
            <person name="Ohta I."/>
            <person name="Ono N."/>
            <person name="Saji S."/>
            <person name="Sakai K."/>
            <person name="Shibata M."/>
            <person name="Shimokawa T."/>
            <person name="Shomura A."/>
            <person name="Song J."/>
            <person name="Takazaki Y."/>
            <person name="Terasawa K."/>
            <person name="Tsuji K."/>
            <person name="Waki K."/>
            <person name="Yamagata H."/>
            <person name="Yamane H."/>
            <person name="Yoshiki S."/>
            <person name="Yoshihara R."/>
            <person name="Yukawa K."/>
            <person name="Zhong H."/>
            <person name="Iwama H."/>
            <person name="Endo T."/>
            <person name="Ito H."/>
            <person name="Hahn J.H."/>
            <person name="Kim H.-I."/>
            <person name="Eun M.-Y."/>
            <person name="Yano M."/>
            <person name="Jiang J."/>
            <person name="Gojobori T."/>
        </authorList>
    </citation>
    <scope>NUCLEOTIDE SEQUENCE [LARGE SCALE GENOMIC DNA]</scope>
    <source>
        <strain>cv. Nipponbare</strain>
    </source>
</reference>
<reference key="2">
    <citation type="journal article" date="2005" name="Nature">
        <title>The map-based sequence of the rice genome.</title>
        <authorList>
            <consortium name="International rice genome sequencing project (IRGSP)"/>
        </authorList>
    </citation>
    <scope>NUCLEOTIDE SEQUENCE [LARGE SCALE GENOMIC DNA]</scope>
    <source>
        <strain>cv. Nipponbare</strain>
    </source>
</reference>
<reference key="3">
    <citation type="journal article" date="2008" name="Nucleic Acids Res.">
        <title>The rice annotation project database (RAP-DB): 2008 update.</title>
        <authorList>
            <consortium name="The rice annotation project (RAP)"/>
        </authorList>
    </citation>
    <scope>GENOME REANNOTATION</scope>
    <source>
        <strain>cv. Nipponbare</strain>
    </source>
</reference>
<reference key="4">
    <citation type="journal article" date="2013" name="Rice">
        <title>Improvement of the Oryza sativa Nipponbare reference genome using next generation sequence and optical map data.</title>
        <authorList>
            <person name="Kawahara Y."/>
            <person name="de la Bastide M."/>
            <person name="Hamilton J.P."/>
            <person name="Kanamori H."/>
            <person name="McCombie W.R."/>
            <person name="Ouyang S."/>
            <person name="Schwartz D.C."/>
            <person name="Tanaka T."/>
            <person name="Wu J."/>
            <person name="Zhou S."/>
            <person name="Childs K.L."/>
            <person name="Davidson R.M."/>
            <person name="Lin H."/>
            <person name="Quesada-Ocampo L."/>
            <person name="Vaillancourt B."/>
            <person name="Sakai H."/>
            <person name="Lee S.S."/>
            <person name="Kim J."/>
            <person name="Numa H."/>
            <person name="Itoh T."/>
            <person name="Buell C.R."/>
            <person name="Matsumoto T."/>
        </authorList>
    </citation>
    <scope>GENOME REANNOTATION</scope>
    <source>
        <strain>cv. Nipponbare</strain>
    </source>
</reference>
<reference key="5">
    <citation type="journal article" date="2003" name="Science">
        <title>Collection, mapping, and annotation of over 28,000 cDNA clones from japonica rice.</title>
        <authorList>
            <consortium name="The rice full-length cDNA consortium"/>
        </authorList>
    </citation>
    <scope>NUCLEOTIDE SEQUENCE [LARGE SCALE MRNA]</scope>
    <source>
        <strain>cv. Nipponbare</strain>
    </source>
</reference>
<reference key="6">
    <citation type="journal article" date="2008" name="BMC Genomics">
        <title>Genome-wide analysis of CCCH zinc finger family in Arabidopsis and rice.</title>
        <authorList>
            <person name="Wang D."/>
            <person name="Guo Y."/>
            <person name="Wu C."/>
            <person name="Yang G."/>
            <person name="Li Y."/>
            <person name="Zheng C."/>
        </authorList>
    </citation>
    <scope>NOMENCLATURE</scope>
</reference>
<feature type="chain" id="PRO_0000346800" description="Zinc finger CCCH domain-containing protein 1">
    <location>
        <begin position="1"/>
        <end position="279"/>
    </location>
</feature>
<feature type="zinc finger region" description="C3H1-type 1" evidence="1">
    <location>
        <begin position="56"/>
        <end position="84"/>
    </location>
</feature>
<feature type="zinc finger region" description="C3H1-type 2" evidence="1">
    <location>
        <begin position="139"/>
        <end position="167"/>
    </location>
</feature>
<feature type="region of interest" description="Disordered" evidence="2">
    <location>
        <begin position="20"/>
        <end position="45"/>
    </location>
</feature>
<gene>
    <name type="ordered locus">Os01g0174600</name>
    <name type="ordered locus">LOC_Os01g07930</name>
    <name type="ORF">OSJNBa0089K24.23</name>
</gene>